<proteinExistence type="inferred from homology"/>
<accession>P31668</accession>
<dbReference type="EC" id="2.3.1.183" evidence="1"/>
<dbReference type="EMBL" id="A01504">
    <property type="protein sequence ID" value="CAA00175.1"/>
    <property type="molecule type" value="Unassigned_DNA"/>
</dbReference>
<dbReference type="SMR" id="P31668"/>
<dbReference type="GO" id="GO:0102971">
    <property type="term" value="F:phosphinothricin N-acetyltransferase activity"/>
    <property type="evidence" value="ECO:0007669"/>
    <property type="project" value="UniProtKB-EC"/>
</dbReference>
<dbReference type="GO" id="GO:0046677">
    <property type="term" value="P:response to antibiotic"/>
    <property type="evidence" value="ECO:0007669"/>
    <property type="project" value="UniProtKB-KW"/>
</dbReference>
<dbReference type="GO" id="GO:0009635">
    <property type="term" value="P:response to herbicide"/>
    <property type="evidence" value="ECO:0007669"/>
    <property type="project" value="UniProtKB-KW"/>
</dbReference>
<dbReference type="CDD" id="cd04301">
    <property type="entry name" value="NAT_SF"/>
    <property type="match status" value="1"/>
</dbReference>
<dbReference type="Gene3D" id="3.40.630.30">
    <property type="match status" value="1"/>
</dbReference>
<dbReference type="InterPro" id="IPR016181">
    <property type="entry name" value="Acyl_CoA_acyltransferase"/>
</dbReference>
<dbReference type="InterPro" id="IPR000182">
    <property type="entry name" value="GNAT_dom"/>
</dbReference>
<dbReference type="PANTHER" id="PTHR43072:SF8">
    <property type="entry name" value="ACYLTRANSFERASE FABY-RELATED"/>
    <property type="match status" value="1"/>
</dbReference>
<dbReference type="PANTHER" id="PTHR43072">
    <property type="entry name" value="N-ACETYLTRANSFERASE"/>
    <property type="match status" value="1"/>
</dbReference>
<dbReference type="Pfam" id="PF00583">
    <property type="entry name" value="Acetyltransf_1"/>
    <property type="match status" value="1"/>
</dbReference>
<dbReference type="SUPFAM" id="SSF55729">
    <property type="entry name" value="Acyl-CoA N-acyltransferases (Nat)"/>
    <property type="match status" value="1"/>
</dbReference>
<dbReference type="PROSITE" id="PS51186">
    <property type="entry name" value="GNAT"/>
    <property type="match status" value="1"/>
</dbReference>
<protein>
    <recommendedName>
        <fullName evidence="1">Phosphinothricin N-acetyltransferase</fullName>
        <shortName evidence="1">PPT N-acetyltransferase</shortName>
        <ecNumber evidence="1">2.3.1.183</ecNumber>
    </recommendedName>
    <alternativeName>
        <fullName evidence="4">Phosphinothricin-resistance protein</fullName>
    </alternativeName>
</protein>
<keyword id="KW-0012">Acyltransferase</keyword>
<keyword id="KW-0046">Antibiotic resistance</keyword>
<keyword id="KW-0359">Herbicide resistance</keyword>
<keyword id="KW-0808">Transferase</keyword>
<name>PAT_ALCFA</name>
<reference key="1">
    <citation type="patent" date="1988-11-17" number="EP0290986">
        <title>Gene resistant to phosphinothricin.</title>
        <authorList>
            <person name="Brauer D."/>
            <person name="Bartsch K."/>
            <person name="Donn G."/>
        </authorList>
    </citation>
    <scope>NUCLEOTIDE SEQUENCE [GENOMIC DNA]</scope>
</reference>
<gene>
    <name type="primary">pat</name>
</gene>
<organism>
    <name type="scientific">Alcaligenes faecalis</name>
    <dbReference type="NCBI Taxonomy" id="511"/>
    <lineage>
        <taxon>Bacteria</taxon>
        <taxon>Pseudomonadati</taxon>
        <taxon>Pseudomonadota</taxon>
        <taxon>Betaproteobacteria</taxon>
        <taxon>Burkholderiales</taxon>
        <taxon>Alcaligenaceae</taxon>
        <taxon>Alcaligenes</taxon>
    </lineage>
</organism>
<evidence type="ECO:0000250" key="1">
    <source>
        <dbReference type="UniProtKB" id="Q57146"/>
    </source>
</evidence>
<evidence type="ECO:0000250" key="2">
    <source>
        <dbReference type="UniProtKB" id="Q8ZPD3"/>
    </source>
</evidence>
<evidence type="ECO:0000255" key="3">
    <source>
        <dbReference type="PROSITE-ProRule" id="PRU00532"/>
    </source>
</evidence>
<evidence type="ECO:0000303" key="4">
    <source ref="1"/>
</evidence>
<evidence type="ECO:0000305" key="5"/>
<sequence length="197" mass="21213">MPSSSSHPSTPDAPQRVGVELARCACTVRVVRDDDLPAITAIYAHHVRTGTASFEEVPPDDTEMRARCAKVLDAGLPYLVAERDGKLLGYAYATHYRPRSAYRFTLEDSVYIAPDAIGQGVGRTLLLTLIARCEGGPWRQLIANVGDSGNTASLGLHAACGFVQAGVLKSVGFKFGRWIDTVLMQRPLNAGDTTLPE</sequence>
<comment type="function">
    <text evidence="1">Inactivates phosphinothricin (PPT) by transfer of an acetyl group from acetyl CoA. This enzyme is an effector of phosphinothricin tripeptide (PTT or bialaphos) resistance.</text>
</comment>
<comment type="catalytic activity">
    <reaction evidence="1">
        <text>phosphinothricin + acetyl-CoA = N-acetylphosphinothricin + CoA + H(+)</text>
        <dbReference type="Rhea" id="RHEA:12597"/>
        <dbReference type="ChEBI" id="CHEBI:15378"/>
        <dbReference type="ChEBI" id="CHEBI:57287"/>
        <dbReference type="ChEBI" id="CHEBI:57288"/>
        <dbReference type="ChEBI" id="CHEBI:58879"/>
        <dbReference type="ChEBI" id="CHEBI:58882"/>
        <dbReference type="EC" id="2.3.1.183"/>
    </reaction>
</comment>
<comment type="similarity">
    <text evidence="5">Belongs to the acetyltransferase family. PAT/BAR subfamily.</text>
</comment>
<feature type="chain" id="PRO_0000074572" description="Phosphinothricin N-acetyltransferase">
    <location>
        <begin position="1"/>
        <end position="197"/>
    </location>
</feature>
<feature type="domain" description="N-acetyltransferase" evidence="3">
    <location>
        <begin position="26"/>
        <end position="189"/>
    </location>
</feature>
<feature type="binding site" evidence="2">
    <location>
        <begin position="110"/>
        <end position="112"/>
    </location>
    <ligand>
        <name>acetyl-CoA</name>
        <dbReference type="ChEBI" id="CHEBI:57288"/>
    </ligand>
</feature>
<feature type="binding site" evidence="2">
    <location>
        <begin position="118"/>
        <end position="123"/>
    </location>
    <ligand>
        <name>acetyl-CoA</name>
        <dbReference type="ChEBI" id="CHEBI:57288"/>
    </ligand>
</feature>
<feature type="binding site" evidence="2">
    <location>
        <position position="150"/>
    </location>
    <ligand>
        <name>acetyl-CoA</name>
        <dbReference type="ChEBI" id="CHEBI:57288"/>
    </ligand>
</feature>